<organism>
    <name type="scientific">Dendrobium officinale</name>
    <name type="common">Orchid</name>
    <dbReference type="NCBI Taxonomy" id="142615"/>
    <lineage>
        <taxon>Eukaryota</taxon>
        <taxon>Viridiplantae</taxon>
        <taxon>Streptophyta</taxon>
        <taxon>Embryophyta</taxon>
        <taxon>Tracheophyta</taxon>
        <taxon>Spermatophyta</taxon>
        <taxon>Magnoliopsida</taxon>
        <taxon>Liliopsida</taxon>
        <taxon>Asparagales</taxon>
        <taxon>Orchidaceae</taxon>
        <taxon>Epidendroideae</taxon>
        <taxon>Malaxideae</taxon>
        <taxon>Dendrobiinae</taxon>
        <taxon>Dendrobium</taxon>
    </lineage>
</organism>
<proteinExistence type="evidence at protein level"/>
<evidence type="ECO:0000250" key="1">
    <source>
        <dbReference type="UniProtKB" id="P31353"/>
    </source>
</evidence>
<evidence type="ECO:0000250" key="2">
    <source>
        <dbReference type="UniProtKB" id="Q92871"/>
    </source>
</evidence>
<evidence type="ECO:0000269" key="3">
    <source>
    </source>
</evidence>
<evidence type="ECO:0000303" key="4">
    <source>
    </source>
</evidence>
<evidence type="ECO:0000305" key="5"/>
<evidence type="ECO:0000305" key="6">
    <source>
    </source>
</evidence>
<gene>
    <name evidence="4" type="primary">PMM</name>
</gene>
<comment type="function">
    <text evidence="3 6">Catalyzes the interconversion of mannose-6-phosphate to mannose-1-phosphate, the precursor for the synthesis of GDP-mannose (Probable). GDP-mannose is an essential sugar nucleotide for the synthesis of D-mannose-containing cell wall polysaccharides (galactomannans and glucomannans), glycolipids, glycoproteins and the antioxidant L-ascorbate (Probable). Involved in the biosynthesis of ascorbate and polysaccharides in response to abiotic stress during seed germination (PubMed:27987037).</text>
</comment>
<comment type="catalytic activity">
    <reaction evidence="6">
        <text>alpha-D-mannose 1-phosphate = D-mannose 6-phosphate</text>
        <dbReference type="Rhea" id="RHEA:11140"/>
        <dbReference type="ChEBI" id="CHEBI:58409"/>
        <dbReference type="ChEBI" id="CHEBI:58735"/>
        <dbReference type="EC" id="5.4.2.8"/>
    </reaction>
</comment>
<comment type="cofactor">
    <cofactor evidence="2">
        <name>Mg(2+)</name>
        <dbReference type="ChEBI" id="CHEBI:18420"/>
    </cofactor>
</comment>
<comment type="pathway">
    <text evidence="5">Nucleotide-sugar biosynthesis; GDP-alpha-D-mannose biosynthesis; alpha-D-mannose 1-phosphate from D-fructose 6-phosphate: step 2/2.</text>
</comment>
<comment type="subunit">
    <text evidence="2">Homodimer.</text>
</comment>
<comment type="subcellular location">
    <subcellularLocation>
        <location evidence="3">Cytoplasm</location>
    </subcellularLocation>
</comment>
<comment type="tissue specificity">
    <text evidence="3">Expressed in roots, leaves, stems and flowers.</text>
</comment>
<comment type="induction">
    <text evidence="3">Induced by abscisic acid (ABA), salicylate (SA), cold stress, osmotic stress and salt stress.</text>
</comment>
<comment type="miscellaneous">
    <text evidence="3">Overexpression of Dendrobium officinale PMM in Arabidopsis increases total leaf ascorbate and polysaccharide content, and increases seed germination rate under osmotic and salt stresses.</text>
</comment>
<comment type="similarity">
    <text evidence="5">Belongs to the eukaryotic PMM family.</text>
</comment>
<feature type="chain" id="PRO_0000451446" description="Phosphomannomutase">
    <location>
        <begin position="1"/>
        <end position="252"/>
    </location>
</feature>
<feature type="active site" description="Nucleophile" evidence="2">
    <location>
        <position position="13"/>
    </location>
</feature>
<feature type="active site" description="Proton donor/acceptor" evidence="2">
    <location>
        <position position="15"/>
    </location>
</feature>
<feature type="binding site" evidence="2">
    <location>
        <position position="13"/>
    </location>
    <ligand>
        <name>Mg(2+)</name>
        <dbReference type="ChEBI" id="CHEBI:18420"/>
        <label>1</label>
    </ligand>
</feature>
<feature type="binding site" evidence="2">
    <location>
        <position position="15"/>
    </location>
    <ligand>
        <name>Mg(2+)</name>
        <dbReference type="ChEBI" id="CHEBI:18420"/>
        <label>1</label>
    </ligand>
</feature>
<feature type="binding site" evidence="2">
    <location>
        <position position="22"/>
    </location>
    <ligand>
        <name>alpha-D-mannose 1-phosphate</name>
        <dbReference type="ChEBI" id="CHEBI:58409"/>
    </ligand>
</feature>
<feature type="binding site" evidence="2">
    <location>
        <position position="124"/>
    </location>
    <ligand>
        <name>alpha-D-mannose 1-phosphate</name>
        <dbReference type="ChEBI" id="CHEBI:58409"/>
    </ligand>
</feature>
<feature type="binding site" evidence="2">
    <location>
        <position position="135"/>
    </location>
    <ligand>
        <name>alpha-D-mannose 1-phosphate</name>
        <dbReference type="ChEBI" id="CHEBI:58409"/>
    </ligand>
</feature>
<feature type="binding site" evidence="2">
    <location>
        <position position="142"/>
    </location>
    <ligand>
        <name>alpha-D-mannose 1-phosphate</name>
        <dbReference type="ChEBI" id="CHEBI:58409"/>
    </ligand>
</feature>
<feature type="binding site" evidence="2">
    <location>
        <position position="180"/>
    </location>
    <ligand>
        <name>alpha-D-mannose 1-phosphate</name>
        <dbReference type="ChEBI" id="CHEBI:58409"/>
    </ligand>
</feature>
<feature type="binding site" evidence="2">
    <location>
        <position position="182"/>
    </location>
    <ligand>
        <name>alpha-D-mannose 1-phosphate</name>
        <dbReference type="ChEBI" id="CHEBI:58409"/>
    </ligand>
</feature>
<feature type="binding site" evidence="1">
    <location>
        <position position="208"/>
    </location>
    <ligand>
        <name>Mg(2+)</name>
        <dbReference type="ChEBI" id="CHEBI:18420"/>
        <label>1</label>
    </ligand>
</feature>
<feature type="binding site" evidence="1">
    <location>
        <position position="220"/>
    </location>
    <ligand>
        <name>Mg(2+)</name>
        <dbReference type="ChEBI" id="CHEBI:18420"/>
        <label>2</label>
    </ligand>
</feature>
<feature type="binding site" evidence="2">
    <location>
        <position position="225"/>
    </location>
    <ligand>
        <name>Mg(2+)</name>
        <dbReference type="ChEBI" id="CHEBI:18420"/>
        <label>2</label>
    </ligand>
</feature>
<protein>
    <recommendedName>
        <fullName evidence="4">Phosphomannomutase</fullName>
        <shortName evidence="4">DoPMM</shortName>
        <ecNumber evidence="6">5.4.2.8</ecNumber>
    </recommendedName>
</protein>
<name>PMM_DENOF</name>
<sequence>MTGRMPGLIVLFDVDGTLTAPRKAITPKMLEFMQDLRKVVTVGVVGGSDLVKISEQLGKSVISDYDYVFAENGLVAYKNGELIGKQNFKSFLGEEKLKELINFTLHYIADLDIPIKRGTFIEFRSGMLNVSPIGRNCSQEERDEFEKYDKVHNIRSKMVSVLREKFKHLNLTFSIGGQISFDVFPQGWDKTYCLRYLEDFPEIHFFGDKTYKGGNDYEIYESERTVGHTVTSPDDTAEQCKLHFLAKQAGDA</sequence>
<keyword id="KW-0963">Cytoplasm</keyword>
<keyword id="KW-0413">Isomerase</keyword>
<keyword id="KW-0460">Magnesium</keyword>
<keyword id="KW-0479">Metal-binding</keyword>
<dbReference type="EC" id="5.4.2.8" evidence="6"/>
<dbReference type="EMBL" id="KF195558">
    <property type="protein sequence ID" value="AHY34917.1"/>
    <property type="molecule type" value="mRNA"/>
</dbReference>
<dbReference type="SMR" id="A0A0U1WZ18"/>
<dbReference type="BRENDA" id="5.4.2.8">
    <property type="organism ID" value="16152"/>
</dbReference>
<dbReference type="UniPathway" id="UPA00126">
    <property type="reaction ID" value="UER00424"/>
</dbReference>
<dbReference type="GO" id="GO:0005829">
    <property type="term" value="C:cytosol"/>
    <property type="evidence" value="ECO:0007669"/>
    <property type="project" value="TreeGrafter"/>
</dbReference>
<dbReference type="GO" id="GO:0046872">
    <property type="term" value="F:metal ion binding"/>
    <property type="evidence" value="ECO:0007669"/>
    <property type="project" value="UniProtKB-KW"/>
</dbReference>
<dbReference type="GO" id="GO:0004615">
    <property type="term" value="F:phosphomannomutase activity"/>
    <property type="evidence" value="ECO:0000314"/>
    <property type="project" value="UniProtKB"/>
</dbReference>
<dbReference type="GO" id="GO:0009298">
    <property type="term" value="P:GDP-mannose biosynthetic process"/>
    <property type="evidence" value="ECO:0000314"/>
    <property type="project" value="UniProtKB"/>
</dbReference>
<dbReference type="GO" id="GO:0006013">
    <property type="term" value="P:mannose metabolic process"/>
    <property type="evidence" value="ECO:0007669"/>
    <property type="project" value="TreeGrafter"/>
</dbReference>
<dbReference type="GO" id="GO:0006487">
    <property type="term" value="P:protein N-linked glycosylation"/>
    <property type="evidence" value="ECO:0007669"/>
    <property type="project" value="TreeGrafter"/>
</dbReference>
<dbReference type="CDD" id="cd02585">
    <property type="entry name" value="HAD_PMM"/>
    <property type="match status" value="1"/>
</dbReference>
<dbReference type="FunFam" id="3.30.1240.20:FF:000001">
    <property type="entry name" value="Phosphomannomutase"/>
    <property type="match status" value="1"/>
</dbReference>
<dbReference type="Gene3D" id="3.30.1240.20">
    <property type="match status" value="1"/>
</dbReference>
<dbReference type="Gene3D" id="3.40.50.1000">
    <property type="entry name" value="HAD superfamily/HAD-like"/>
    <property type="match status" value="1"/>
</dbReference>
<dbReference type="InterPro" id="IPR036412">
    <property type="entry name" value="HAD-like_sf"/>
</dbReference>
<dbReference type="InterPro" id="IPR006379">
    <property type="entry name" value="HAD-SF_hydro_IIB"/>
</dbReference>
<dbReference type="InterPro" id="IPR023214">
    <property type="entry name" value="HAD_sf"/>
</dbReference>
<dbReference type="InterPro" id="IPR005002">
    <property type="entry name" value="PMM"/>
</dbReference>
<dbReference type="InterPro" id="IPR043169">
    <property type="entry name" value="PMM_cap"/>
</dbReference>
<dbReference type="NCBIfam" id="TIGR01484">
    <property type="entry name" value="HAD-SF-IIB"/>
    <property type="match status" value="1"/>
</dbReference>
<dbReference type="PANTHER" id="PTHR10466">
    <property type="entry name" value="PHOSPHOMANNOMUTASE"/>
    <property type="match status" value="1"/>
</dbReference>
<dbReference type="PANTHER" id="PTHR10466:SF0">
    <property type="entry name" value="PHOSPHOMANNOMUTASE"/>
    <property type="match status" value="1"/>
</dbReference>
<dbReference type="Pfam" id="PF03332">
    <property type="entry name" value="PMM"/>
    <property type="match status" value="1"/>
</dbReference>
<dbReference type="SFLD" id="SFLDF00445">
    <property type="entry name" value="alpha-phosphomannomutase"/>
    <property type="match status" value="1"/>
</dbReference>
<dbReference type="SFLD" id="SFLDG01140">
    <property type="entry name" value="C2.B:_Phosphomannomutase_and_P"/>
    <property type="match status" value="1"/>
</dbReference>
<dbReference type="SUPFAM" id="SSF56784">
    <property type="entry name" value="HAD-like"/>
    <property type="match status" value="1"/>
</dbReference>
<reference key="1">
    <citation type="submission" date="2013-06" db="EMBL/GenBank/DDBJ databases">
        <title>Purification, separation and characterization of phosphoglucomutase and phosphomannomutase from maize leaves.</title>
        <authorList>
            <person name="Chunmei H."/>
            <person name="Jun D."/>
        </authorList>
    </citation>
    <scope>NUCLEOTIDE SEQUENCE [MRNA]</scope>
</reference>
<reference key="2">
    <citation type="journal article" date="2017" name="Protoplasma">
        <title>Molecular cloning and functional analysis of the phosphomannomutase (PMM) gene from Dendrobium officinale and evidence for the involvement of an abiotic stress response during germination.</title>
        <authorList>
            <person name="He C."/>
            <person name="Zeng S."/>
            <person name="Teixeira da Silva J.A."/>
            <person name="Yu Z."/>
            <person name="Tan J."/>
            <person name="Duan J."/>
        </authorList>
    </citation>
    <scope>FUNCTION</scope>
    <scope>SUBCELLULAR LOCATION</scope>
    <scope>CATALYTIC ACTIVITY</scope>
    <scope>TISSUE SPECIFICITY</scope>
    <scope>INDUCTION</scope>
</reference>
<accession>A0A0U1WZ18</accession>